<sequence length="553" mass="64932">MSTARLQQQFIRLWQRFSGLPTETTLQELAEVLCCSRRHVRSLLGSMQQEGWLSWQAEAGRGKRSQLTFLYSGLALQQQRAEELLEQEGIDQLVQLVGDKKAVRQMLLSQLGRSFRQGKHILRVLYYRPLQNLLPGTALRRSETHMVRQIFNGLTRINEENGELEPDLSHHWQAISPLHWRFYLRPAIHFHHGRELEMNDVITSLTRLIPQPLFSHITAVRSPTPYVIDVHLSAPDNWLPWLLGSVHAMILPQEWENQPDFRRHPIGTGPYSVIRNHQSQLKIQAFDNYFGFRALIDEVNIWVLPELSEELVYSGVQLQADDTSKNELESRLEEGCYFLLFDQRSPLTRNPDIRRWLCELITPVALLSHADPFYQRYWSPAYGMLPRWHHNRLRVLETKPEGLTELTLTFYSHHSEFDAISQTLTKLLADQGVNLKIHVVDYTQWYQGDAQSDMWLGSANFYLPLEFSLFATLYELPLLQYCLDEELHQDVELWRNNTLQMADWSQRLVSQNQFHPLFHHWLELYGQHSMRGVRMNTLGWFDFKSAWFTPPET</sequence>
<evidence type="ECO:0000255" key="1">
    <source>
        <dbReference type="HAMAP-Rule" id="MF_01449"/>
    </source>
</evidence>
<proteinExistence type="inferred from homology"/>
<feature type="chain" id="PRO_0000309256" description="HTH-type transcriptional regulator SgrR">
    <location>
        <begin position="1"/>
        <end position="553"/>
    </location>
</feature>
<feature type="domain" description="HTH marR-type" evidence="1">
    <location>
        <begin position="1"/>
        <end position="117"/>
    </location>
</feature>
<feature type="DNA-binding region" description="H-T-H motif" evidence="1">
    <location>
        <begin position="26"/>
        <end position="49"/>
    </location>
</feature>
<feature type="region of interest" description="Solute-binding" evidence="1">
    <location>
        <begin position="163"/>
        <end position="494"/>
    </location>
</feature>
<protein>
    <recommendedName>
        <fullName evidence="1">HTH-type transcriptional regulator SgrR</fullName>
    </recommendedName>
</protein>
<comment type="function">
    <text evidence="1">Activates the small RNA gene sgrS under glucose-phosphate stress conditions as well as yfdZ. Represses its own transcription under both stress and non-stress conditions. Might act as a sensor of the intracellular accumulation of phosphoglucose by binding these molecules in its C-terminal solute-binding domain.</text>
</comment>
<gene>
    <name evidence="1" type="primary">sgrR</name>
    <name type="ordered locus">YE0644</name>
</gene>
<reference key="1">
    <citation type="journal article" date="2006" name="PLoS Genet.">
        <title>The complete genome sequence and comparative genome analysis of the high pathogenicity Yersinia enterocolitica strain 8081.</title>
        <authorList>
            <person name="Thomson N.R."/>
            <person name="Howard S."/>
            <person name="Wren B.W."/>
            <person name="Holden M.T.G."/>
            <person name="Crossman L."/>
            <person name="Challis G.L."/>
            <person name="Churcher C."/>
            <person name="Mungall K."/>
            <person name="Brooks K."/>
            <person name="Chillingworth T."/>
            <person name="Feltwell T."/>
            <person name="Abdellah Z."/>
            <person name="Hauser H."/>
            <person name="Jagels K."/>
            <person name="Maddison M."/>
            <person name="Moule S."/>
            <person name="Sanders M."/>
            <person name="Whitehead S."/>
            <person name="Quail M.A."/>
            <person name="Dougan G."/>
            <person name="Parkhill J."/>
            <person name="Prentice M.B."/>
        </authorList>
    </citation>
    <scope>NUCLEOTIDE SEQUENCE [LARGE SCALE GENOMIC DNA]</scope>
    <source>
        <strain>NCTC 13174 / 8081</strain>
    </source>
</reference>
<name>SGRR_YERE8</name>
<dbReference type="EMBL" id="AM286415">
    <property type="protein sequence ID" value="CAL10755.1"/>
    <property type="molecule type" value="Genomic_DNA"/>
</dbReference>
<dbReference type="RefSeq" id="WP_011815554.1">
    <property type="nucleotide sequence ID" value="NC_008800.1"/>
</dbReference>
<dbReference type="RefSeq" id="YP_001004995.1">
    <property type="nucleotide sequence ID" value="NC_008800.1"/>
</dbReference>
<dbReference type="SMR" id="A1JJG7"/>
<dbReference type="KEGG" id="yen:YE0644"/>
<dbReference type="PATRIC" id="fig|393305.7.peg.737"/>
<dbReference type="eggNOG" id="COG4533">
    <property type="taxonomic scope" value="Bacteria"/>
</dbReference>
<dbReference type="HOGENOM" id="CLU_017028_12_3_6"/>
<dbReference type="OrthoDB" id="5894719at2"/>
<dbReference type="Proteomes" id="UP000000642">
    <property type="component" value="Chromosome"/>
</dbReference>
<dbReference type="GO" id="GO:0003677">
    <property type="term" value="F:DNA binding"/>
    <property type="evidence" value="ECO:0007669"/>
    <property type="project" value="UniProtKB-KW"/>
</dbReference>
<dbReference type="GO" id="GO:1904680">
    <property type="term" value="F:peptide transmembrane transporter activity"/>
    <property type="evidence" value="ECO:0007669"/>
    <property type="project" value="TreeGrafter"/>
</dbReference>
<dbReference type="GO" id="GO:0045892">
    <property type="term" value="P:negative regulation of DNA-templated transcription"/>
    <property type="evidence" value="ECO:0007669"/>
    <property type="project" value="UniProtKB-UniRule"/>
</dbReference>
<dbReference type="GO" id="GO:0015833">
    <property type="term" value="P:peptide transport"/>
    <property type="evidence" value="ECO:0007669"/>
    <property type="project" value="TreeGrafter"/>
</dbReference>
<dbReference type="GO" id="GO:0045893">
    <property type="term" value="P:positive regulation of DNA-templated transcription"/>
    <property type="evidence" value="ECO:0007669"/>
    <property type="project" value="UniProtKB-UniRule"/>
</dbReference>
<dbReference type="CDD" id="cd08507">
    <property type="entry name" value="PBP2_SgrR_like"/>
    <property type="match status" value="1"/>
</dbReference>
<dbReference type="FunFam" id="3.40.190.10:FF:000070">
    <property type="entry name" value="HTH-type transcriptional regulator SgrR"/>
    <property type="match status" value="1"/>
</dbReference>
<dbReference type="Gene3D" id="3.40.190.10">
    <property type="entry name" value="Periplasmic binding protein-like II"/>
    <property type="match status" value="1"/>
</dbReference>
<dbReference type="HAMAP" id="MF_01449">
    <property type="entry name" value="HTH_type_SgrR"/>
    <property type="match status" value="1"/>
</dbReference>
<dbReference type="InterPro" id="IPR039424">
    <property type="entry name" value="SBP_5"/>
</dbReference>
<dbReference type="InterPro" id="IPR000914">
    <property type="entry name" value="SBP_5_dom"/>
</dbReference>
<dbReference type="InterPro" id="IPR025370">
    <property type="entry name" value="SgrR_HTH_N"/>
</dbReference>
<dbReference type="InterPro" id="IPR023767">
    <property type="entry name" value="Tscrpt_reg_SgrR"/>
</dbReference>
<dbReference type="InterPro" id="IPR036390">
    <property type="entry name" value="WH_DNA-bd_sf"/>
</dbReference>
<dbReference type="NCBIfam" id="NF010149">
    <property type="entry name" value="PRK13626.1"/>
    <property type="match status" value="1"/>
</dbReference>
<dbReference type="PANTHER" id="PTHR30290:SF72">
    <property type="entry name" value="HTH-TYPE TRANSCRIPTIONAL REGULATOR SGRR"/>
    <property type="match status" value="1"/>
</dbReference>
<dbReference type="PANTHER" id="PTHR30290">
    <property type="entry name" value="PERIPLASMIC BINDING COMPONENT OF ABC TRANSPORTER"/>
    <property type="match status" value="1"/>
</dbReference>
<dbReference type="Pfam" id="PF00496">
    <property type="entry name" value="SBP_bac_5"/>
    <property type="match status" value="1"/>
</dbReference>
<dbReference type="Pfam" id="PF12793">
    <property type="entry name" value="SgrR_N"/>
    <property type="match status" value="1"/>
</dbReference>
<dbReference type="SUPFAM" id="SSF53850">
    <property type="entry name" value="Periplasmic binding protein-like II"/>
    <property type="match status" value="1"/>
</dbReference>
<dbReference type="SUPFAM" id="SSF46785">
    <property type="entry name" value="Winged helix' DNA-binding domain"/>
    <property type="match status" value="1"/>
</dbReference>
<organism>
    <name type="scientific">Yersinia enterocolitica serotype O:8 / biotype 1B (strain NCTC 13174 / 8081)</name>
    <dbReference type="NCBI Taxonomy" id="393305"/>
    <lineage>
        <taxon>Bacteria</taxon>
        <taxon>Pseudomonadati</taxon>
        <taxon>Pseudomonadota</taxon>
        <taxon>Gammaproteobacteria</taxon>
        <taxon>Enterobacterales</taxon>
        <taxon>Yersiniaceae</taxon>
        <taxon>Yersinia</taxon>
    </lineage>
</organism>
<keyword id="KW-0010">Activator</keyword>
<keyword id="KW-0238">DNA-binding</keyword>
<keyword id="KW-0678">Repressor</keyword>
<keyword id="KW-0804">Transcription</keyword>
<keyword id="KW-0805">Transcription regulation</keyword>
<accession>A1JJG7</accession>